<dbReference type="SMR" id="P0C8D4"/>
<dbReference type="GO" id="GO:0005576">
    <property type="term" value="C:extracellular region"/>
    <property type="evidence" value="ECO:0007669"/>
    <property type="project" value="UniProtKB-SubCell"/>
</dbReference>
<dbReference type="GO" id="GO:0090729">
    <property type="term" value="F:toxin activity"/>
    <property type="evidence" value="ECO:0007669"/>
    <property type="project" value="UniProtKB-KW"/>
</dbReference>
<keyword id="KW-0903">Direct protein sequencing</keyword>
<keyword id="KW-1015">Disulfide bond</keyword>
<keyword id="KW-0528">Neurotoxin</keyword>
<keyword id="KW-0964">Secreted</keyword>
<keyword id="KW-0800">Toxin</keyword>
<evidence type="ECO:0000269" key="1">
    <source>
    </source>
</evidence>
<evidence type="ECO:0000303" key="2">
    <source>
    </source>
</evidence>
<evidence type="ECO:0000305" key="3"/>
<evidence type="ECO:0000305" key="4">
    <source>
    </source>
</evidence>
<protein>
    <recommendedName>
        <fullName evidence="2">Scolopendra 20528.11 Da toxin</fullName>
    </recommendedName>
    <alternativeName>
        <fullName evidence="3">Cysteine-rich venom protein</fullName>
        <shortName evidence="3">CRVP</shortName>
    </alternativeName>
</protein>
<sequence length="30" mass="3194">CQVVERGLDAKAKAAMLDAHNKARQKVANG</sequence>
<reference key="1">
    <citation type="journal article" date="2007" name="Toxicon">
        <title>Venomic analyses of Scolopendra viridicornis nigra and Scolopendra angulata (Centipede, Scolopendromorpha): shedding light on venoms from a neglected group.</title>
        <authorList>
            <person name="Rates B."/>
            <person name="Bemquerer M.P."/>
            <person name="Richardson M."/>
            <person name="Borges M.H."/>
            <person name="Morales R.A.V."/>
            <person name="De Lima M.E."/>
            <person name="Pimenta A.M.C."/>
        </authorList>
    </citation>
    <scope>PROTEIN SEQUENCE</scope>
    <scope>MASS SPECTROMETRY</scope>
    <scope>SUBCELLULAR LOCATION</scope>
    <source>
        <tissue>Venom</tissue>
    </source>
</reference>
<organism>
    <name type="scientific">Scolopendra angulata</name>
    <name type="common">Barbados giant red centipede</name>
    <dbReference type="NCBI Taxonomy" id="486498"/>
    <lineage>
        <taxon>Eukaryota</taxon>
        <taxon>Metazoa</taxon>
        <taxon>Ecdysozoa</taxon>
        <taxon>Arthropoda</taxon>
        <taxon>Myriapoda</taxon>
        <taxon>Chilopoda</taxon>
        <taxon>Pleurostigmophora</taxon>
        <taxon>Scolopendromorpha</taxon>
        <taxon>Scolopendridae</taxon>
        <taxon>Scolopendra</taxon>
    </lineage>
</organism>
<name>VA5A_SCOAN</name>
<comment type="subcellular location">
    <subcellularLocation>
        <location evidence="1">Secreted</location>
    </subcellularLocation>
</comment>
<comment type="tissue specificity">
    <text evidence="4">Expressed by the venom gland.</text>
</comment>
<comment type="PTM">
    <text evidence="3">Contains 3 disulfide bonds.</text>
</comment>
<comment type="mass spectrometry" mass="20528.11" method="Electrospray" evidence="1"/>
<comment type="miscellaneous">
    <text evidence="4">Shows similarity with the venom allergen 5 from wasps. This similarity may explain why patients with allergies to centipede venom also display allergic reaction to wasp, honey bee and/or yellow jacket venom.</text>
</comment>
<comment type="similarity">
    <text evidence="3">Belongs to the CRISP family. Venom allergen 5-like subfamily.</text>
</comment>
<proteinExistence type="evidence at protein level"/>
<accession>P0C8D4</accession>
<feature type="chain" id="PRO_0000352870" description="Scolopendra 20528.11 Da toxin">
    <location>
        <begin position="1"/>
        <end position="30" status="greater than"/>
    </location>
</feature>
<feature type="unsure residue" evidence="3">
    <location>
        <position position="1"/>
    </location>
</feature>
<feature type="non-terminal residue">
    <location>
        <position position="30"/>
    </location>
</feature>